<reference key="1">
    <citation type="journal article" date="2002" name="Nature">
        <title>Complete genome sequence of the model actinomycete Streptomyces coelicolor A3(2).</title>
        <authorList>
            <person name="Bentley S.D."/>
            <person name="Chater K.F."/>
            <person name="Cerdeno-Tarraga A.-M."/>
            <person name="Challis G.L."/>
            <person name="Thomson N.R."/>
            <person name="James K.D."/>
            <person name="Harris D.E."/>
            <person name="Quail M.A."/>
            <person name="Kieser H."/>
            <person name="Harper D."/>
            <person name="Bateman A."/>
            <person name="Brown S."/>
            <person name="Chandra G."/>
            <person name="Chen C.W."/>
            <person name="Collins M."/>
            <person name="Cronin A."/>
            <person name="Fraser A."/>
            <person name="Goble A."/>
            <person name="Hidalgo J."/>
            <person name="Hornsby T."/>
            <person name="Howarth S."/>
            <person name="Huang C.-H."/>
            <person name="Kieser T."/>
            <person name="Larke L."/>
            <person name="Murphy L.D."/>
            <person name="Oliver K."/>
            <person name="O'Neil S."/>
            <person name="Rabbinowitsch E."/>
            <person name="Rajandream M.A."/>
            <person name="Rutherford K.M."/>
            <person name="Rutter S."/>
            <person name="Seeger K."/>
            <person name="Saunders D."/>
            <person name="Sharp S."/>
            <person name="Squares R."/>
            <person name="Squares S."/>
            <person name="Taylor K."/>
            <person name="Warren T."/>
            <person name="Wietzorrek A."/>
            <person name="Woodward J.R."/>
            <person name="Barrell B.G."/>
            <person name="Parkhill J."/>
            <person name="Hopwood D.A."/>
        </authorList>
    </citation>
    <scope>NUCLEOTIDE SEQUENCE [LARGE SCALE GENOMIC DNA]</scope>
    <source>
        <strain>ATCC BAA-471 / A3(2) / M145</strain>
    </source>
</reference>
<gene>
    <name type="primary">alr</name>
    <name type="ordered locus">SCO4745</name>
    <name type="ORF">SC6G4.23</name>
</gene>
<name>ALR_STRCO</name>
<sequence>MSETTARRDADAVLRARAEIDLAALRANVRALRERAPGAALMAVVKADAYGHGAIPCARAAVAAGATWLGTATPQEALALRAAEPGLPDDVRIMCWLWTPGGPWREAVEARLDVSVSAMWAMEEVTGAARAAGVPARVQLKADTGLGRGGCQPGADWERLVGAALRAEEEGLLRVTGLWSHFACADEPGHPSIAAQLTRFREMTAYAEQRGLRPEVRHIANSPATLTLPDAHFDLVRPGIAMYGVSPSPEIGTPADFGLRPVMTLAASLALVKQVPGGHGVSYGHHYTTPGETTLGLVPLGYADGIPRHASSSGPVLVDGKWRTVAGRIAMDQFVVDLGGDRPEPGAEAVLFGPGDRGEPTAEDWAQAAGTIAYEIVTRIGSRVPRVYVNE</sequence>
<evidence type="ECO:0000255" key="1">
    <source>
        <dbReference type="HAMAP-Rule" id="MF_01201"/>
    </source>
</evidence>
<evidence type="ECO:0007829" key="2">
    <source>
        <dbReference type="PDB" id="5FAG"/>
    </source>
</evidence>
<evidence type="ECO:0007829" key="3">
    <source>
        <dbReference type="PDB" id="5FAJ"/>
    </source>
</evidence>
<accession>O86786</accession>
<comment type="function">
    <text evidence="1">Catalyzes the interconversion of L-alanine and D-alanine. May also act on other amino acids.</text>
</comment>
<comment type="catalytic activity">
    <reaction evidence="1">
        <text>L-alanine = D-alanine</text>
        <dbReference type="Rhea" id="RHEA:20249"/>
        <dbReference type="ChEBI" id="CHEBI:57416"/>
        <dbReference type="ChEBI" id="CHEBI:57972"/>
        <dbReference type="EC" id="5.1.1.1"/>
    </reaction>
</comment>
<comment type="cofactor">
    <cofactor evidence="1">
        <name>pyridoxal 5'-phosphate</name>
        <dbReference type="ChEBI" id="CHEBI:597326"/>
    </cofactor>
</comment>
<comment type="pathway">
    <text evidence="1">Amino-acid biosynthesis; D-alanine biosynthesis; D-alanine from L-alanine: step 1/1.</text>
</comment>
<comment type="similarity">
    <text evidence="1">Belongs to the alanine racemase family.</text>
</comment>
<feature type="chain" id="PRO_0000114580" description="Alanine racemase">
    <location>
        <begin position="1"/>
        <end position="391"/>
    </location>
</feature>
<feature type="active site" description="Proton acceptor; specific for D-alanine" evidence="1">
    <location>
        <position position="46"/>
    </location>
</feature>
<feature type="active site" description="Proton acceptor; specific for L-alanine" evidence="1">
    <location>
        <position position="283"/>
    </location>
</feature>
<feature type="binding site" evidence="1">
    <location>
        <position position="148"/>
    </location>
    <ligand>
        <name>substrate</name>
    </ligand>
</feature>
<feature type="binding site" evidence="1">
    <location>
        <position position="331"/>
    </location>
    <ligand>
        <name>substrate</name>
    </ligand>
</feature>
<feature type="modified residue" description="N6-(pyridoxal phosphate)lysine" evidence="1">
    <location>
        <position position="46"/>
    </location>
</feature>
<feature type="helix" evidence="2">
    <location>
        <begin position="3"/>
        <end position="12"/>
    </location>
</feature>
<feature type="turn" evidence="2">
    <location>
        <begin position="13"/>
        <end position="15"/>
    </location>
</feature>
<feature type="strand" evidence="2">
    <location>
        <begin position="16"/>
        <end position="21"/>
    </location>
</feature>
<feature type="helix" evidence="2">
    <location>
        <begin position="22"/>
        <end position="35"/>
    </location>
</feature>
<feature type="strand" evidence="2">
    <location>
        <begin position="39"/>
        <end position="44"/>
    </location>
</feature>
<feature type="helix" evidence="2">
    <location>
        <begin position="46"/>
        <end position="50"/>
    </location>
</feature>
<feature type="helix" evidence="2">
    <location>
        <begin position="54"/>
        <end position="63"/>
    </location>
</feature>
<feature type="strand" evidence="2">
    <location>
        <begin position="68"/>
        <end position="73"/>
    </location>
</feature>
<feature type="helix" evidence="2">
    <location>
        <begin position="74"/>
        <end position="81"/>
    </location>
</feature>
<feature type="strand" evidence="2">
    <location>
        <begin position="92"/>
        <end position="95"/>
    </location>
</feature>
<feature type="helix" evidence="2">
    <location>
        <begin position="104"/>
        <end position="109"/>
    </location>
</feature>
<feature type="strand" evidence="2">
    <location>
        <begin position="113"/>
        <end position="116"/>
    </location>
</feature>
<feature type="helix" evidence="2">
    <location>
        <begin position="119"/>
        <end position="132"/>
    </location>
</feature>
<feature type="strand" evidence="2">
    <location>
        <begin position="136"/>
        <end position="142"/>
    </location>
</feature>
<feature type="strand" evidence="3">
    <location>
        <begin position="144"/>
        <end position="146"/>
    </location>
</feature>
<feature type="strand" evidence="2">
    <location>
        <begin position="148"/>
        <end position="151"/>
    </location>
</feature>
<feature type="helix" evidence="2">
    <location>
        <begin position="155"/>
        <end position="169"/>
    </location>
</feature>
<feature type="strand" evidence="2">
    <location>
        <begin position="172"/>
        <end position="179"/>
    </location>
</feature>
<feature type="helix" evidence="2">
    <location>
        <begin position="191"/>
        <end position="209"/>
    </location>
</feature>
<feature type="strand" evidence="2">
    <location>
        <begin position="215"/>
        <end position="218"/>
    </location>
</feature>
<feature type="helix" evidence="2">
    <location>
        <begin position="222"/>
        <end position="227"/>
    </location>
</feature>
<feature type="helix" evidence="2">
    <location>
        <begin position="229"/>
        <end position="231"/>
    </location>
</feature>
<feature type="helix" evidence="2">
    <location>
        <begin position="239"/>
        <end position="242"/>
    </location>
</feature>
<feature type="turn" evidence="2">
    <location>
        <begin position="249"/>
        <end position="251"/>
    </location>
</feature>
<feature type="helix" evidence="2">
    <location>
        <begin position="255"/>
        <end position="257"/>
    </location>
</feature>
<feature type="strand" evidence="2">
    <location>
        <begin position="263"/>
        <end position="268"/>
    </location>
</feature>
<feature type="strand" evidence="2">
    <location>
        <begin position="270"/>
        <end position="275"/>
    </location>
</feature>
<feature type="strand" evidence="3">
    <location>
        <begin position="280"/>
        <end position="282"/>
    </location>
</feature>
<feature type="helix" evidence="2">
    <location>
        <begin position="283"/>
        <end position="285"/>
    </location>
</feature>
<feature type="strand" evidence="2">
    <location>
        <begin position="290"/>
        <end position="299"/>
    </location>
</feature>
<feature type="helix" evidence="2">
    <location>
        <begin position="302"/>
        <end position="304"/>
    </location>
</feature>
<feature type="helix" evidence="2">
    <location>
        <begin position="308"/>
        <end position="310"/>
    </location>
</feature>
<feature type="turn" evidence="2">
    <location>
        <begin position="311"/>
        <end position="313"/>
    </location>
</feature>
<feature type="strand" evidence="2">
    <location>
        <begin position="315"/>
        <end position="318"/>
    </location>
</feature>
<feature type="strand" evidence="2">
    <location>
        <begin position="321"/>
        <end position="325"/>
    </location>
</feature>
<feature type="strand" evidence="2">
    <location>
        <begin position="334"/>
        <end position="337"/>
    </location>
</feature>
<feature type="strand" evidence="2">
    <location>
        <begin position="348"/>
        <end position="355"/>
    </location>
</feature>
<feature type="helix" evidence="2">
    <location>
        <begin position="362"/>
        <end position="368"/>
    </location>
</feature>
<feature type="helix" evidence="2">
    <location>
        <begin position="373"/>
        <end position="378"/>
    </location>
</feature>
<feature type="strand" evidence="2">
    <location>
        <begin position="386"/>
        <end position="389"/>
    </location>
</feature>
<organism>
    <name type="scientific">Streptomyces coelicolor (strain ATCC BAA-471 / A3(2) / M145)</name>
    <dbReference type="NCBI Taxonomy" id="100226"/>
    <lineage>
        <taxon>Bacteria</taxon>
        <taxon>Bacillati</taxon>
        <taxon>Actinomycetota</taxon>
        <taxon>Actinomycetes</taxon>
        <taxon>Kitasatosporales</taxon>
        <taxon>Streptomycetaceae</taxon>
        <taxon>Streptomyces</taxon>
        <taxon>Streptomyces albidoflavus group</taxon>
    </lineage>
</organism>
<proteinExistence type="evidence at protein level"/>
<keyword id="KW-0002">3D-structure</keyword>
<keyword id="KW-0413">Isomerase</keyword>
<keyword id="KW-0663">Pyridoxal phosphate</keyword>
<keyword id="KW-1185">Reference proteome</keyword>
<dbReference type="EC" id="5.1.1.1" evidence="1"/>
<dbReference type="EMBL" id="AL939121">
    <property type="protein sequence ID" value="CAA20401.1"/>
    <property type="molecule type" value="Genomic_DNA"/>
</dbReference>
<dbReference type="PIR" id="T35574">
    <property type="entry name" value="T35574"/>
</dbReference>
<dbReference type="RefSeq" id="NP_628903.1">
    <property type="nucleotide sequence ID" value="NC_003888.3"/>
</dbReference>
<dbReference type="RefSeq" id="WP_011029835.1">
    <property type="nucleotide sequence ID" value="NZ_VNID01000016.1"/>
</dbReference>
<dbReference type="PDB" id="5FAC">
    <property type="method" value="X-ray"/>
    <property type="resolution" value="2.80 A"/>
    <property type="chains" value="A/B/C/D=1-391"/>
</dbReference>
<dbReference type="PDB" id="5FAG">
    <property type="method" value="X-ray"/>
    <property type="resolution" value="1.51 A"/>
    <property type="chains" value="A/B/C/D=1-391"/>
</dbReference>
<dbReference type="PDB" id="5FAJ">
    <property type="method" value="X-ray"/>
    <property type="resolution" value="1.64 A"/>
    <property type="chains" value="A/B/C/D=1-391"/>
</dbReference>
<dbReference type="PDBsum" id="5FAC"/>
<dbReference type="PDBsum" id="5FAG"/>
<dbReference type="PDBsum" id="5FAJ"/>
<dbReference type="SMR" id="O86786"/>
<dbReference type="FunCoup" id="O86786">
    <property type="interactions" value="54"/>
</dbReference>
<dbReference type="STRING" id="100226.gene:17762394"/>
<dbReference type="PaxDb" id="100226-SCO4745"/>
<dbReference type="KEGG" id="sco:SCO4745"/>
<dbReference type="PATRIC" id="fig|100226.15.peg.4817"/>
<dbReference type="eggNOG" id="COG0787">
    <property type="taxonomic scope" value="Bacteria"/>
</dbReference>
<dbReference type="HOGENOM" id="CLU_028393_0_0_11"/>
<dbReference type="InParanoid" id="O86786"/>
<dbReference type="OrthoDB" id="9813814at2"/>
<dbReference type="PhylomeDB" id="O86786"/>
<dbReference type="BRENDA" id="5.1.1.1">
    <property type="organism ID" value="5998"/>
</dbReference>
<dbReference type="UniPathway" id="UPA00042">
    <property type="reaction ID" value="UER00497"/>
</dbReference>
<dbReference type="Proteomes" id="UP000001973">
    <property type="component" value="Chromosome"/>
</dbReference>
<dbReference type="GO" id="GO:0005829">
    <property type="term" value="C:cytosol"/>
    <property type="evidence" value="ECO:0000318"/>
    <property type="project" value="GO_Central"/>
</dbReference>
<dbReference type="GO" id="GO:0008784">
    <property type="term" value="F:alanine racemase activity"/>
    <property type="evidence" value="ECO:0000318"/>
    <property type="project" value="GO_Central"/>
</dbReference>
<dbReference type="GO" id="GO:0030170">
    <property type="term" value="F:pyridoxal phosphate binding"/>
    <property type="evidence" value="ECO:0000318"/>
    <property type="project" value="GO_Central"/>
</dbReference>
<dbReference type="GO" id="GO:0030632">
    <property type="term" value="P:D-alanine biosynthetic process"/>
    <property type="evidence" value="ECO:0000318"/>
    <property type="project" value="GO_Central"/>
</dbReference>
<dbReference type="GO" id="GO:0009252">
    <property type="term" value="P:peptidoglycan biosynthetic process"/>
    <property type="evidence" value="ECO:0000318"/>
    <property type="project" value="GO_Central"/>
</dbReference>
<dbReference type="CDD" id="cd00430">
    <property type="entry name" value="PLPDE_III_AR"/>
    <property type="match status" value="1"/>
</dbReference>
<dbReference type="FunFam" id="2.40.37.10:FF:000015">
    <property type="entry name" value="Alanine racemase"/>
    <property type="match status" value="1"/>
</dbReference>
<dbReference type="FunFam" id="3.20.20.10:FF:000043">
    <property type="entry name" value="Alanine racemase"/>
    <property type="match status" value="1"/>
</dbReference>
<dbReference type="Gene3D" id="3.20.20.10">
    <property type="entry name" value="Alanine racemase"/>
    <property type="match status" value="1"/>
</dbReference>
<dbReference type="Gene3D" id="2.40.37.10">
    <property type="entry name" value="Lyase, Ornithine Decarboxylase, Chain A, domain 1"/>
    <property type="match status" value="1"/>
</dbReference>
<dbReference type="HAMAP" id="MF_01201">
    <property type="entry name" value="Ala_racemase"/>
    <property type="match status" value="1"/>
</dbReference>
<dbReference type="InterPro" id="IPR000821">
    <property type="entry name" value="Ala_racemase"/>
</dbReference>
<dbReference type="InterPro" id="IPR009006">
    <property type="entry name" value="Ala_racemase/Decarboxylase_C"/>
</dbReference>
<dbReference type="InterPro" id="IPR011079">
    <property type="entry name" value="Ala_racemase_C"/>
</dbReference>
<dbReference type="InterPro" id="IPR001608">
    <property type="entry name" value="Ala_racemase_N"/>
</dbReference>
<dbReference type="InterPro" id="IPR020622">
    <property type="entry name" value="Ala_racemase_pyridoxalP-BS"/>
</dbReference>
<dbReference type="InterPro" id="IPR029066">
    <property type="entry name" value="PLP-binding_barrel"/>
</dbReference>
<dbReference type="NCBIfam" id="TIGR00492">
    <property type="entry name" value="alr"/>
    <property type="match status" value="1"/>
</dbReference>
<dbReference type="PANTHER" id="PTHR30511">
    <property type="entry name" value="ALANINE RACEMASE"/>
    <property type="match status" value="1"/>
</dbReference>
<dbReference type="PANTHER" id="PTHR30511:SF0">
    <property type="entry name" value="ALANINE RACEMASE, CATABOLIC-RELATED"/>
    <property type="match status" value="1"/>
</dbReference>
<dbReference type="Pfam" id="PF00842">
    <property type="entry name" value="Ala_racemase_C"/>
    <property type="match status" value="1"/>
</dbReference>
<dbReference type="Pfam" id="PF01168">
    <property type="entry name" value="Ala_racemase_N"/>
    <property type="match status" value="1"/>
</dbReference>
<dbReference type="PRINTS" id="PR00992">
    <property type="entry name" value="ALARACEMASE"/>
</dbReference>
<dbReference type="SMART" id="SM01005">
    <property type="entry name" value="Ala_racemase_C"/>
    <property type="match status" value="1"/>
</dbReference>
<dbReference type="SUPFAM" id="SSF50621">
    <property type="entry name" value="Alanine racemase C-terminal domain-like"/>
    <property type="match status" value="1"/>
</dbReference>
<dbReference type="SUPFAM" id="SSF51419">
    <property type="entry name" value="PLP-binding barrel"/>
    <property type="match status" value="1"/>
</dbReference>
<dbReference type="PROSITE" id="PS00395">
    <property type="entry name" value="ALANINE_RACEMASE"/>
    <property type="match status" value="1"/>
</dbReference>
<protein>
    <recommendedName>
        <fullName evidence="1">Alanine racemase</fullName>
        <ecNumber evidence="1">5.1.1.1</ecNumber>
    </recommendedName>
</protein>